<accession>Q9GU57</accession>
<sequence length="88" mass="9687">MHLSLARSAVLMLLLLFALGNFVVVQSGLITRDVDNGQLTDNRRNLQTEWNPLSLFMSRRSCNNSCQSHSDCASHCICTFRGCGAVNG</sequence>
<dbReference type="EMBL" id="AF193511">
    <property type="protein sequence ID" value="AAG28407.1"/>
    <property type="molecule type" value="mRNA"/>
</dbReference>
<dbReference type="PDB" id="1IXT">
    <property type="method" value="NMR"/>
    <property type="chains" value="A=61-87"/>
</dbReference>
<dbReference type="PDB" id="2MSO">
    <property type="method" value="NMR"/>
    <property type="chains" value="A=61-88"/>
</dbReference>
<dbReference type="PDBsum" id="1IXT"/>
<dbReference type="PDBsum" id="2MSO"/>
<dbReference type="BMRB" id="Q9GU57"/>
<dbReference type="SMR" id="Q9GU57"/>
<dbReference type="TCDB" id="8.B.22.1.1">
    <property type="family name" value="the p-conotoxin cystine knot (p-cck) family"/>
</dbReference>
<dbReference type="ConoServer" id="609">
    <property type="toxin name" value="GmIXA precursor"/>
</dbReference>
<dbReference type="EvolutionaryTrace" id="Q9GU57"/>
<dbReference type="GO" id="GO:0005576">
    <property type="term" value="C:extracellular region"/>
    <property type="evidence" value="ECO:0007669"/>
    <property type="project" value="UniProtKB-SubCell"/>
</dbReference>
<dbReference type="GO" id="GO:0090729">
    <property type="term" value="F:toxin activity"/>
    <property type="evidence" value="ECO:0007669"/>
    <property type="project" value="UniProtKB-KW"/>
</dbReference>
<dbReference type="InterPro" id="IPR010012">
    <property type="entry name" value="Toxin_11"/>
</dbReference>
<dbReference type="Pfam" id="PF07473">
    <property type="entry name" value="Toxin_11"/>
    <property type="match status" value="1"/>
</dbReference>
<dbReference type="SUPFAM" id="SSF57059">
    <property type="entry name" value="omega toxin-like"/>
    <property type="match status" value="1"/>
</dbReference>
<protein>
    <recommendedName>
        <fullName evidence="4">Conotoxin Gm9.1</fullName>
    </recommendedName>
    <alternativeName>
        <fullName evidence="5">Conotoxin Gm9a</fullName>
    </alternativeName>
    <alternativeName>
        <fullName evidence="4 5">Spasmodic peptide</fullName>
    </alternativeName>
</protein>
<organism>
    <name type="scientific">Conus gloriamaris</name>
    <name type="common">Glory-of-the-Sea cone</name>
    <dbReference type="NCBI Taxonomy" id="37336"/>
    <lineage>
        <taxon>Eukaryota</taxon>
        <taxon>Metazoa</taxon>
        <taxon>Spiralia</taxon>
        <taxon>Lophotrochozoa</taxon>
        <taxon>Mollusca</taxon>
        <taxon>Gastropoda</taxon>
        <taxon>Caenogastropoda</taxon>
        <taxon>Neogastropoda</taxon>
        <taxon>Conoidea</taxon>
        <taxon>Conidae</taxon>
        <taxon>Conus</taxon>
        <taxon>Cylinder</taxon>
    </lineage>
</organism>
<comment type="function">
    <text evidence="3">Neurotoxin. In vivo, elicits 'spasmodic' symptomatology.</text>
</comment>
<comment type="subcellular location">
    <subcellularLocation>
        <location evidence="7">Secreted</location>
    </subcellularLocation>
</comment>
<comment type="tissue specificity">
    <text evidence="7">Expressed by the venom duct.</text>
</comment>
<comment type="domain">
    <text evidence="6">The cysteine framework is IX (C-C-C-C-C-C).</text>
</comment>
<comment type="similarity">
    <text evidence="6">Belongs to the conotoxin P superfamily.</text>
</comment>
<reference key="1">
    <citation type="journal article" date="2000" name="Biochemistry">
        <title>The spasmodic peptide defines a new conotoxin superfamily.</title>
        <authorList>
            <person name="Lirazan M.B."/>
            <person name="Hooper D."/>
            <person name="Corpuz G.P."/>
            <person name="Ramilo C.A."/>
            <person name="Bandyopadhyay P."/>
            <person name="Cruz L.J."/>
            <person name="Olivera B.M."/>
        </authorList>
    </citation>
    <scope>NUCLEOTIDE SEQUENCE [MRNA]</scope>
    <scope>AMIDATION AT ASN-87</scope>
    <source>
        <tissue>Venom duct</tissue>
    </source>
</reference>
<reference key="2">
    <citation type="journal article" date="2002" name="J. Biol. Chem.">
        <title>Structure of a novel P-superfamily spasmodic conotoxin reveals an inhibitory cystine knot motif.</title>
        <authorList>
            <person name="Miles L.A."/>
            <person name="Dy C.Y."/>
            <person name="Nielsen J."/>
            <person name="Barnham K.J."/>
            <person name="Hinds M.G."/>
            <person name="Olivera B.M."/>
            <person name="Bulaj G."/>
            <person name="Norton R.S."/>
        </authorList>
    </citation>
    <scope>SYNTHESIS OF 61-87</scope>
    <scope>FUNCTION</scope>
    <scope>STRUCTURE BY NMR OF 61-87</scope>
    <scope>DISULFIDE BONDS</scope>
</reference>
<name>CP91_CONGL</name>
<proteinExistence type="evidence at protein level"/>
<evidence type="ECO:0000255" key="1"/>
<evidence type="ECO:0000269" key="2">
    <source>
    </source>
</evidence>
<evidence type="ECO:0000269" key="3">
    <source>
    </source>
</evidence>
<evidence type="ECO:0000303" key="4">
    <source>
    </source>
</evidence>
<evidence type="ECO:0000303" key="5">
    <source>
    </source>
</evidence>
<evidence type="ECO:0000305" key="6"/>
<evidence type="ECO:0000305" key="7">
    <source>
    </source>
</evidence>
<evidence type="ECO:0000305" key="8">
    <source>
    </source>
</evidence>
<evidence type="ECO:0007744" key="9">
    <source>
        <dbReference type="PDB" id="1IXT"/>
    </source>
</evidence>
<evidence type="ECO:0007744" key="10">
    <source>
        <dbReference type="PDB" id="2MSO"/>
    </source>
</evidence>
<evidence type="ECO:0007829" key="11">
    <source>
        <dbReference type="PDB" id="1IXT"/>
    </source>
</evidence>
<feature type="signal peptide" evidence="1">
    <location>
        <begin position="1"/>
        <end position="27"/>
    </location>
</feature>
<feature type="propeptide" id="PRO_0000035013" evidence="6">
    <location>
        <begin position="28"/>
        <end position="58"/>
    </location>
</feature>
<feature type="peptide" id="PRO_0000035014" description="Conotoxin Gm9.1" evidence="8">
    <location>
        <begin position="61"/>
        <end position="87"/>
    </location>
</feature>
<feature type="modified residue" description="Asparagine amide" evidence="2">
    <location>
        <position position="87"/>
    </location>
</feature>
<feature type="disulfide bond" evidence="3 9 10">
    <location>
        <begin position="62"/>
        <end position="76"/>
    </location>
</feature>
<feature type="disulfide bond" evidence="3 9 10">
    <location>
        <begin position="66"/>
        <end position="78"/>
    </location>
</feature>
<feature type="disulfide bond" evidence="3 9 10">
    <location>
        <begin position="72"/>
        <end position="83"/>
    </location>
</feature>
<feature type="strand" evidence="11">
    <location>
        <begin position="67"/>
        <end position="70"/>
    </location>
</feature>
<feature type="strand" evidence="11">
    <location>
        <begin position="72"/>
        <end position="79"/>
    </location>
</feature>
<feature type="strand" evidence="11">
    <location>
        <begin position="82"/>
        <end position="85"/>
    </location>
</feature>
<keyword id="KW-0002">3D-structure</keyword>
<keyword id="KW-0027">Amidation</keyword>
<keyword id="KW-0165">Cleavage on pair of basic residues</keyword>
<keyword id="KW-1015">Disulfide bond</keyword>
<keyword id="KW-0528">Neurotoxin</keyword>
<keyword id="KW-0964">Secreted</keyword>
<keyword id="KW-0732">Signal</keyword>
<keyword id="KW-0800">Toxin</keyword>